<name>NDUS1_ACACA</name>
<evidence type="ECO:0000250" key="1"/>
<evidence type="ECO:0000255" key="2">
    <source>
        <dbReference type="PROSITE-ProRule" id="PRU01004"/>
    </source>
</evidence>
<evidence type="ECO:0000255" key="3">
    <source>
        <dbReference type="PROSITE-ProRule" id="PRU01184"/>
    </source>
</evidence>
<evidence type="ECO:0000305" key="4"/>
<keyword id="KW-0001">2Fe-2S</keyword>
<keyword id="KW-0004">4Fe-4S</keyword>
<keyword id="KW-0249">Electron transport</keyword>
<keyword id="KW-0408">Iron</keyword>
<keyword id="KW-0411">Iron-sulfur</keyword>
<keyword id="KW-0472">Membrane</keyword>
<keyword id="KW-0479">Metal-binding</keyword>
<keyword id="KW-0496">Mitochondrion</keyword>
<keyword id="KW-0999">Mitochondrion inner membrane</keyword>
<keyword id="KW-0520">NAD</keyword>
<keyword id="KW-0560">Oxidoreductase</keyword>
<keyword id="KW-0679">Respiratory chain</keyword>
<keyword id="KW-1278">Translocase</keyword>
<keyword id="KW-0813">Transport</keyword>
<keyword id="KW-0830">Ubiquinone</keyword>
<sequence length="675" mass="77554">MKNISFKVNDFQYTINNKLTLIQACLKNKVDISRFCFHEKLSIAGNCRMCLVEDLKQVKPLASCAINVSNSMNIYTNTLKVKKARESVLEFLLANHPLDCPICDQGGECDLQDQSVVFGSDRGRFYEFKRSVEDKDCGPLIKTIMNRCIHCTRCVRFSNEVAGVNILGVTGRGSKMEIGFYIENLMRSELSGNVIDLCPVGALTSKPFAFTSRPWELKSYNSIDVLDSLHSNIRVDIRGTKIMRILPRVNSELNEDWITDKIRFSYDSFRRQRLYDPMVKISGSFLKIGWKKAMLFIKKFFCNFLGFNHSSFIPLRGYIGDYLDLETIYTFKKFLLLNGSNFFLPSSSYNDLTALYSFNTPLTRLDEGDFCILLDVNLRVELPIVNSRIKQLVSKKMLPVFVLGFYSNFNYFVKHISNSSKTLLHVLEGSHWLSAKISKKFSSKPIFLIGDSSSLLKGSLIVPLFNFTNVICDNWNGLNIISNDSSYLSTKEFNLSSSHSQNSHLLNFPINFVLNYDKAVLVDSSAFQIYQGHHGDTNAINSNLIFPSTSFIEKNSFYSNSLAIVQKTKKILFSPGNSRDDWKILNALIDNFGFSYFKVRNSFDLVSFLSESTPFILYKRSFSFKCFGFYEQLVYHFFNYFSVNNNYYIYDSITRNSKIMSLCFNKFKMKGYNFF</sequence>
<proteinExistence type="inferred from homology"/>
<reference key="1">
    <citation type="journal article" date="1995" name="J. Mol. Biol.">
        <title>The mitochondrial DNA of the amoeboid protozoon, Acanthamoeba castellanii: complete sequence, gene content and genome organization.</title>
        <authorList>
            <person name="Burger G."/>
            <person name="Plante I."/>
            <person name="Lonergan K.M."/>
            <person name="Gray M.W."/>
        </authorList>
    </citation>
    <scope>NUCLEOTIDE SEQUENCE [GENOMIC DNA]</scope>
    <source>
        <strain>ATCC 30010 / Neff</strain>
    </source>
</reference>
<feature type="chain" id="PRO_0000118536" description="NADH-ubiquinone oxidoreductase 75 kDa subunit">
    <location>
        <begin position="1"/>
        <end position="675"/>
    </location>
</feature>
<feature type="domain" description="2Fe-2S ferredoxin-type">
    <location>
        <begin position="2"/>
        <end position="80"/>
    </location>
</feature>
<feature type="domain" description="4Fe-4S His(Cys)3-ligated-type" evidence="3">
    <location>
        <begin position="80"/>
        <end position="119"/>
    </location>
</feature>
<feature type="domain" description="4Fe-4S Mo/W bis-MGD-type" evidence="2">
    <location>
        <begin position="217"/>
        <end position="273"/>
    </location>
</feature>
<feature type="binding site" evidence="1">
    <location>
        <position position="36"/>
    </location>
    <ligand>
        <name>[2Fe-2S] cluster</name>
        <dbReference type="ChEBI" id="CHEBI:190135"/>
    </ligand>
</feature>
<feature type="binding site" evidence="1">
    <location>
        <position position="47"/>
    </location>
    <ligand>
        <name>[2Fe-2S] cluster</name>
        <dbReference type="ChEBI" id="CHEBI:190135"/>
    </ligand>
</feature>
<feature type="binding site" evidence="1">
    <location>
        <position position="50"/>
    </location>
    <ligand>
        <name>[2Fe-2S] cluster</name>
        <dbReference type="ChEBI" id="CHEBI:190135"/>
    </ligand>
</feature>
<feature type="binding site" evidence="1">
    <location>
        <position position="64"/>
    </location>
    <ligand>
        <name>[2Fe-2S] cluster</name>
        <dbReference type="ChEBI" id="CHEBI:190135"/>
    </ligand>
</feature>
<feature type="binding site" evidence="3">
    <location>
        <position position="96"/>
    </location>
    <ligand>
        <name>[4Fe-4S] cluster</name>
        <dbReference type="ChEBI" id="CHEBI:49883"/>
        <label>1</label>
    </ligand>
</feature>
<feature type="binding site" evidence="3">
    <location>
        <position position="100"/>
    </location>
    <ligand>
        <name>[4Fe-4S] cluster</name>
        <dbReference type="ChEBI" id="CHEBI:49883"/>
        <label>1</label>
    </ligand>
</feature>
<feature type="binding site" evidence="3">
    <location>
        <position position="103"/>
    </location>
    <ligand>
        <name>[4Fe-4S] cluster</name>
        <dbReference type="ChEBI" id="CHEBI:49883"/>
        <label>1</label>
    </ligand>
</feature>
<feature type="binding site" evidence="3">
    <location>
        <position position="109"/>
    </location>
    <ligand>
        <name>[4Fe-4S] cluster</name>
        <dbReference type="ChEBI" id="CHEBI:49883"/>
        <label>1</label>
    </ligand>
</feature>
<feature type="binding site" evidence="1">
    <location>
        <position position="148"/>
    </location>
    <ligand>
        <name>[4Fe-4S] cluster</name>
        <dbReference type="ChEBI" id="CHEBI:49883"/>
        <label>2</label>
    </ligand>
</feature>
<feature type="binding site" evidence="1">
    <location>
        <position position="151"/>
    </location>
    <ligand>
        <name>[4Fe-4S] cluster</name>
        <dbReference type="ChEBI" id="CHEBI:49883"/>
        <label>2</label>
    </ligand>
</feature>
<feature type="binding site" evidence="1">
    <location>
        <position position="154"/>
    </location>
    <ligand>
        <name>[4Fe-4S] cluster</name>
        <dbReference type="ChEBI" id="CHEBI:49883"/>
        <label>2</label>
    </ligand>
</feature>
<feature type="binding site" evidence="1">
    <location>
        <position position="198"/>
    </location>
    <ligand>
        <name>[4Fe-4S] cluster</name>
        <dbReference type="ChEBI" id="CHEBI:49883"/>
        <label>2</label>
    </ligand>
</feature>
<dbReference type="EC" id="7.1.1.2"/>
<dbReference type="EMBL" id="U12386">
    <property type="protein sequence ID" value="AAD11824.1"/>
    <property type="molecule type" value="Genomic_DNA"/>
</dbReference>
<dbReference type="PIR" id="S53832">
    <property type="entry name" value="S53832"/>
</dbReference>
<dbReference type="RefSeq" id="NP_042531.1">
    <property type="nucleotide sequence ID" value="NC_001637.1"/>
</dbReference>
<dbReference type="SMR" id="Q37373"/>
<dbReference type="GeneID" id="1734026"/>
<dbReference type="GO" id="GO:0005743">
    <property type="term" value="C:mitochondrial inner membrane"/>
    <property type="evidence" value="ECO:0007669"/>
    <property type="project" value="UniProtKB-SubCell"/>
</dbReference>
<dbReference type="GO" id="GO:0051537">
    <property type="term" value="F:2 iron, 2 sulfur cluster binding"/>
    <property type="evidence" value="ECO:0007669"/>
    <property type="project" value="UniProtKB-KW"/>
</dbReference>
<dbReference type="GO" id="GO:0051539">
    <property type="term" value="F:4 iron, 4 sulfur cluster binding"/>
    <property type="evidence" value="ECO:0007669"/>
    <property type="project" value="UniProtKB-KW"/>
</dbReference>
<dbReference type="GO" id="GO:0046872">
    <property type="term" value="F:metal ion binding"/>
    <property type="evidence" value="ECO:0007669"/>
    <property type="project" value="UniProtKB-KW"/>
</dbReference>
<dbReference type="GO" id="GO:0008137">
    <property type="term" value="F:NADH dehydrogenase (ubiquinone) activity"/>
    <property type="evidence" value="ECO:0007669"/>
    <property type="project" value="UniProtKB-EC"/>
</dbReference>
<dbReference type="GO" id="GO:0042773">
    <property type="term" value="P:ATP synthesis coupled electron transport"/>
    <property type="evidence" value="ECO:0007669"/>
    <property type="project" value="InterPro"/>
</dbReference>
<dbReference type="CDD" id="cd00207">
    <property type="entry name" value="fer2"/>
    <property type="match status" value="1"/>
</dbReference>
<dbReference type="CDD" id="cd02774">
    <property type="entry name" value="MopB_Res-Cmplx1_Nad11-M"/>
    <property type="match status" value="1"/>
</dbReference>
<dbReference type="FunFam" id="3.10.20.740:FF:000001">
    <property type="entry name" value="NADH-quinone oxidoreductase subunit G"/>
    <property type="match status" value="1"/>
</dbReference>
<dbReference type="FunFam" id="3.30.70.20:FF:000002">
    <property type="entry name" value="NADH-ubiquinone oxidoreductase 75 kDa subunit"/>
    <property type="match status" value="1"/>
</dbReference>
<dbReference type="Gene3D" id="3.10.20.740">
    <property type="match status" value="1"/>
</dbReference>
<dbReference type="Gene3D" id="3.30.70.20">
    <property type="match status" value="1"/>
</dbReference>
<dbReference type="Gene3D" id="3.40.50.740">
    <property type="match status" value="1"/>
</dbReference>
<dbReference type="InterPro" id="IPR036010">
    <property type="entry name" value="2Fe-2S_ferredoxin-like_sf"/>
</dbReference>
<dbReference type="InterPro" id="IPR001041">
    <property type="entry name" value="2Fe-2S_ferredoxin-type"/>
</dbReference>
<dbReference type="InterPro" id="IPR006656">
    <property type="entry name" value="Mopterin_OxRdtase"/>
</dbReference>
<dbReference type="InterPro" id="IPR006963">
    <property type="entry name" value="Mopterin_OxRdtase_4Fe-4S_dom"/>
</dbReference>
<dbReference type="InterPro" id="IPR000283">
    <property type="entry name" value="NADH_UbQ_OxRdtase_75kDa_su_CS"/>
</dbReference>
<dbReference type="InterPro" id="IPR054351">
    <property type="entry name" value="NADH_UbQ_OxRdtase_ferredoxin"/>
</dbReference>
<dbReference type="InterPro" id="IPR010228">
    <property type="entry name" value="NADH_UbQ_OxRdtase_Gsu"/>
</dbReference>
<dbReference type="InterPro" id="IPR019574">
    <property type="entry name" value="NADH_UbQ_OxRdtase_Gsu_4Fe4S-bd"/>
</dbReference>
<dbReference type="InterPro" id="IPR050123">
    <property type="entry name" value="Prok_molybdopt-oxidoreductase"/>
</dbReference>
<dbReference type="NCBIfam" id="TIGR01973">
    <property type="entry name" value="NuoG"/>
    <property type="match status" value="1"/>
</dbReference>
<dbReference type="PANTHER" id="PTHR43105:SF13">
    <property type="entry name" value="NADH-UBIQUINONE OXIDOREDUCTASE 75 KDA SUBUNIT, MITOCHONDRIAL"/>
    <property type="match status" value="1"/>
</dbReference>
<dbReference type="PANTHER" id="PTHR43105">
    <property type="entry name" value="RESPIRATORY NITRATE REDUCTASE"/>
    <property type="match status" value="1"/>
</dbReference>
<dbReference type="Pfam" id="PF13510">
    <property type="entry name" value="Fer2_4"/>
    <property type="match status" value="1"/>
</dbReference>
<dbReference type="Pfam" id="PF22151">
    <property type="entry name" value="Fer4_NDSU1"/>
    <property type="match status" value="1"/>
</dbReference>
<dbReference type="Pfam" id="PF22117">
    <property type="entry name" value="Fer4_Nqo3"/>
    <property type="match status" value="1"/>
</dbReference>
<dbReference type="Pfam" id="PF00384">
    <property type="entry name" value="Molybdopterin"/>
    <property type="match status" value="1"/>
</dbReference>
<dbReference type="Pfam" id="PF10588">
    <property type="entry name" value="NADH-G_4Fe-4S_3"/>
    <property type="match status" value="1"/>
</dbReference>
<dbReference type="SMART" id="SM00929">
    <property type="entry name" value="NADH-G_4Fe-4S_3"/>
    <property type="match status" value="1"/>
</dbReference>
<dbReference type="SUPFAM" id="SSF54292">
    <property type="entry name" value="2Fe-2S ferredoxin-like"/>
    <property type="match status" value="1"/>
</dbReference>
<dbReference type="SUPFAM" id="SSF54862">
    <property type="entry name" value="4Fe-4S ferredoxins"/>
    <property type="match status" value="1"/>
</dbReference>
<dbReference type="SUPFAM" id="SSF53706">
    <property type="entry name" value="Formate dehydrogenase/DMSO reductase, domains 1-3"/>
    <property type="match status" value="1"/>
</dbReference>
<dbReference type="PROSITE" id="PS51839">
    <property type="entry name" value="4FE4S_HC3"/>
    <property type="match status" value="1"/>
</dbReference>
<dbReference type="PROSITE" id="PS51669">
    <property type="entry name" value="4FE4S_MOW_BIS_MGD"/>
    <property type="match status" value="1"/>
</dbReference>
<dbReference type="PROSITE" id="PS00642">
    <property type="entry name" value="COMPLEX1_75K_2"/>
    <property type="match status" value="1"/>
</dbReference>
<dbReference type="PROSITE" id="PS00643">
    <property type="entry name" value="COMPLEX1_75K_3"/>
    <property type="match status" value="1"/>
</dbReference>
<geneLocation type="mitochondrion"/>
<gene>
    <name type="primary">NAD11</name>
</gene>
<comment type="function">
    <text evidence="1">Core subunit of the mitochondrial membrane respiratory chain NADH dehydrogenase (Complex I) that is believed to belong to the minimal assembly required for catalysis. Complex I functions in the transfer of electrons from NADH to the respiratory chain. The immediate electron acceptor for the enzyme is believed to be ubiquinone (By similarity). This is the largest subunit of complex I and it is a component of the iron-sulfur (IP) fragment of the enzyme. It may form part of the active site crevice where NADH is oxidized (By similarity).</text>
</comment>
<comment type="catalytic activity">
    <reaction>
        <text>a ubiquinone + NADH + 5 H(+)(in) = a ubiquinol + NAD(+) + 4 H(+)(out)</text>
        <dbReference type="Rhea" id="RHEA:29091"/>
        <dbReference type="Rhea" id="RHEA-COMP:9565"/>
        <dbReference type="Rhea" id="RHEA-COMP:9566"/>
        <dbReference type="ChEBI" id="CHEBI:15378"/>
        <dbReference type="ChEBI" id="CHEBI:16389"/>
        <dbReference type="ChEBI" id="CHEBI:17976"/>
        <dbReference type="ChEBI" id="CHEBI:57540"/>
        <dbReference type="ChEBI" id="CHEBI:57945"/>
        <dbReference type="EC" id="7.1.1.2"/>
    </reaction>
</comment>
<comment type="cofactor">
    <cofactor evidence="1">
        <name>[2Fe-2S] cluster</name>
        <dbReference type="ChEBI" id="CHEBI:190135"/>
    </cofactor>
    <text evidence="1">Binds 1 [2Fe-2S] cluster per subunit.</text>
</comment>
<comment type="cofactor">
    <cofactor evidence="1">
        <name>[4Fe-4S] cluster</name>
        <dbReference type="ChEBI" id="CHEBI:49883"/>
    </cofactor>
    <text evidence="1">Binds 2 [4Fe-4S] clusters per subunit.</text>
</comment>
<comment type="subunit">
    <text evidence="1">Complex I is composed of about 30 different subunits.</text>
</comment>
<comment type="subcellular location">
    <subcellularLocation>
        <location evidence="1">Mitochondrion inner membrane</location>
    </subcellularLocation>
    <text evidence="1">Matrix and cytoplasmic side of the mitochondrial inner membrane.</text>
</comment>
<comment type="similarity">
    <text evidence="4">Belongs to the complex I 75 kDa subunit family.</text>
</comment>
<organism>
    <name type="scientific">Acanthamoeba castellanii</name>
    <name type="common">Amoeba</name>
    <dbReference type="NCBI Taxonomy" id="5755"/>
    <lineage>
        <taxon>Eukaryota</taxon>
        <taxon>Amoebozoa</taxon>
        <taxon>Discosea</taxon>
        <taxon>Longamoebia</taxon>
        <taxon>Centramoebida</taxon>
        <taxon>Acanthamoebidae</taxon>
        <taxon>Acanthamoeba</taxon>
    </lineage>
</organism>
<accession>Q37373</accession>
<protein>
    <recommendedName>
        <fullName>NADH-ubiquinone oxidoreductase 75 kDa subunit</fullName>
        <ecNumber>7.1.1.2</ecNumber>
    </recommendedName>
    <alternativeName>
        <fullName>Complex I-75kD</fullName>
        <shortName>CI-75kD</shortName>
    </alternativeName>
    <alternativeName>
        <fullName>NADH dehydrogenase subunit 11</fullName>
    </alternativeName>
</protein>